<name>DR7_HHV6U</name>
<feature type="chain" id="PRO_0000342567" description="Transactivator protein DR7">
    <location>
        <begin position="1"/>
        <end position="357"/>
    </location>
</feature>
<feature type="region of interest" description="Interaction with host p53" evidence="1">
    <location>
        <begin position="107"/>
        <end position="187"/>
    </location>
</feature>
<organismHost>
    <name type="scientific">Homo sapiens</name>
    <name type="common">Human</name>
    <dbReference type="NCBI Taxonomy" id="9606"/>
</organismHost>
<gene>
    <name type="primary">DR7L</name>
    <name type="synonym">ORF-1</name>
</gene>
<gene>
    <name type="primary">DR7R</name>
    <name type="synonym">ORF-1</name>
</gene>
<proteinExistence type="evidence at protein level"/>
<accession>Q89743</accession>
<accession>Q69578</accession>
<protein>
    <recommendedName>
        <fullName>Transactivator protein DR7</fullName>
    </recommendedName>
</protein>
<organism>
    <name type="scientific">Human herpesvirus 6A (strain Uganda-1102)</name>
    <name type="common">HHV-6 variant A</name>
    <name type="synonym">Human B lymphotropic virus</name>
    <dbReference type="NCBI Taxonomy" id="10370"/>
    <lineage>
        <taxon>Viruses</taxon>
        <taxon>Duplodnaviria</taxon>
        <taxon>Heunggongvirae</taxon>
        <taxon>Peploviricota</taxon>
        <taxon>Herviviricetes</taxon>
        <taxon>Herpesvirales</taxon>
        <taxon>Orthoherpesviridae</taxon>
        <taxon>Betaherpesvirinae</taxon>
        <taxon>Roseolovirus</taxon>
        <taxon>Roseolovirus humanbeta6a</taxon>
        <taxon>Human betaherpesvirus 6A</taxon>
    </lineage>
</organism>
<reference key="1">
    <citation type="journal article" date="1994" name="Oncogene">
        <title>A transforming fragment within the direct repeat region of human herpesvirus type 6 that transactivates HIV-1.</title>
        <authorList>
            <person name="Thompson J."/>
            <person name="Choudhury S."/>
            <person name="Kashanchi F."/>
            <person name="Doniger J."/>
            <person name="Berneman Z."/>
            <person name="Frenkel N."/>
            <person name="Rosenthal L.J."/>
        </authorList>
    </citation>
    <scope>NUCLEOTIDE SEQUENCE [GENOMIC DNA]</scope>
</reference>
<reference key="2">
    <citation type="journal article" date="1995" name="Virology">
        <title>The DNA sequence of human herpesvirus-6: structure, coding content, and genome evolution.</title>
        <authorList>
            <person name="Gompels U.A."/>
            <person name="Nicholas J."/>
            <person name="Lawrence G.L."/>
            <person name="Jones M."/>
            <person name="Thomson B.J."/>
            <person name="Martin M.E.D."/>
            <person name="Efstathiou S."/>
            <person name="Craxton M.A."/>
            <person name="Macaulay H.A."/>
        </authorList>
    </citation>
    <scope>NUCLEOTIDE SEQUENCE [LARGE SCALE GENOMIC DNA]</scope>
</reference>
<reference key="3">
    <citation type="journal article" date="1994" name="Virology">
        <title>Transcriptional activation of minimal HIV-1 promoter by ORF-1 protein expressed from the SalI-L fragment of human herpesvirus 6.</title>
        <authorList>
            <person name="Kashanchi F."/>
            <person name="Thompson J."/>
            <person name="Sadaie M.R."/>
            <person name="Doniger J."/>
            <person name="Duvall J."/>
            <person name="Brady J.N."/>
            <person name="Rosenthal L.J."/>
        </authorList>
    </citation>
    <scope>FUNCTION</scope>
</reference>
<reference key="4">
    <citation type="journal article" date="1997" name="Oncogene">
        <title>Human herpesvirus 6 (HHV-6) ORF-1 transactivating gene exhibits malignant transforming activity and its protein binds to p53.</title>
        <authorList>
            <person name="Kashanchi F."/>
            <person name="Araujo J."/>
            <person name="Doniger J."/>
            <person name="Muralidhar S."/>
            <person name="Hoch R."/>
            <person name="Khleif S."/>
            <person name="Mendelson E."/>
            <person name="Thompson J."/>
            <person name="Azumi N."/>
            <person name="Brady J.N."/>
            <person name="Luppi M."/>
            <person name="Torelli G."/>
            <person name="Rosenthal L.J."/>
        </authorList>
    </citation>
    <scope>FUNCTION</scope>
    <scope>INTERACTION WITH HUMAN P53</scope>
    <scope>INDUCTION</scope>
</reference>
<dbReference type="EMBL" id="X73675">
    <property type="protein sequence ID" value="CAA52024.1"/>
    <property type="status" value="ALT_FRAME"/>
    <property type="molecule type" value="Genomic_DNA"/>
</dbReference>
<dbReference type="EMBL" id="X83413">
    <property type="status" value="NOT_ANNOTATED_CDS"/>
    <property type="molecule type" value="Genomic_DNA"/>
</dbReference>
<dbReference type="PIR" id="S43067">
    <property type="entry name" value="S43067"/>
</dbReference>
<dbReference type="Proteomes" id="UP000009295">
    <property type="component" value="Segment"/>
</dbReference>
<dbReference type="InterPro" id="IPR003360">
    <property type="entry name" value="US22-like"/>
</dbReference>
<dbReference type="Pfam" id="PF02393">
    <property type="entry name" value="US22"/>
    <property type="match status" value="1"/>
</dbReference>
<sequence length="357" mass="40271">MRHLPFHGMPLRVQMFCAFFIRSETTDKNKATPTITFMVSCCFVWVKRLFYRVGRIHHVQSLTYARPITALDSCLYVCCGYGEKLQPVGFVKSYVTNSQLDTLRVLLVGKDGAVYVHHMRAARLCRLASSTTEFTRRGLQRDAVTYEEDLELPDQRMCGTNARHLFDVIAAAADEHNLLTVGGLCQTHAGVSCNLLETVGDPWTAVPAARMTLTVPQVQYRLWPEARRDLRRHLYAGHPLGPWLVCGVLSRERETQKPSPPIRTTVGNVPTPGPREVEIAWVVLTLAGPLLAFWPDTGKICRLANSFSTLWKMGPRAMRGHWTYSAPGRHLPGDAWPLCEHVRPQVGKLPRKRAYLD</sequence>
<keyword id="KW-0010">Activator</keyword>
<keyword id="KW-0945">Host-virus interaction</keyword>
<keyword id="KW-0553">Oncogene</keyword>
<keyword id="KW-1185">Reference proteome</keyword>
<keyword id="KW-0804">Transcription</keyword>
<keyword id="KW-0805">Transcription regulation</keyword>
<evidence type="ECO:0000269" key="1">
    <source>
    </source>
</evidence>
<evidence type="ECO:0000305" key="2"/>
<evidence type="ECO:0000305" key="3">
    <source>
    </source>
</evidence>
<evidence type="ECO:0000305" key="4">
    <source>
    </source>
</evidence>
<comment type="function">
    <text evidence="1 3 4">Involved in transactivation (Probable). Displays transforming activity (PubMed:9018122).</text>
</comment>
<comment type="subunit">
    <text evidence="1">Interacts with host p53 and inhibits p53-activated transcription.</text>
</comment>
<comment type="induction">
    <text evidence="1">Detected as early as 18 hpi.</text>
</comment>
<comment type="similarity">
    <text evidence="2">Belongs to the herpesviridae US22 family.</text>
</comment>
<comment type="sequence caution" evidence="2">
    <conflict type="frameshift">
        <sequence resource="EMBL-CDS" id="CAA52024"/>
    </conflict>
</comment>